<protein>
    <recommendedName>
        <fullName evidence="6 7 8">Snaclec EMS16 subunit alpha</fullName>
        <shortName evidence="6 7 8">EMS16A</shortName>
    </recommendedName>
</protein>
<sequence>MGRFISVSFGLLVVFLSLSGTGADFDCPSDWTAYDQHCYLAIGEPQNWYEAERFCTEQAKDGHLVSIQSREEGNFVAQLVSGFMHRSEIYVWIGLRDRREEQQCNPEWNDGSKIIYVNWKEGESKMCQGLTKWTNFHDWNNINCEDLYPFVCKFSAV</sequence>
<name>SLA_ECHML</name>
<feature type="signal peptide" evidence="2 3">
    <location>
        <begin position="1"/>
        <end position="23"/>
    </location>
</feature>
<feature type="chain" id="PRO_0000318802" description="Snaclec EMS16 subunit alpha">
    <location>
        <begin position="24"/>
        <end position="157"/>
    </location>
</feature>
<feature type="domain" description="C-type lectin" evidence="1">
    <location>
        <begin position="34"/>
        <end position="153"/>
    </location>
</feature>
<feature type="site" description="Key residue for binding with integrin">
    <location>
        <position position="84"/>
    </location>
</feature>
<feature type="site" description="Key residue for binding with integrin">
    <location>
        <position position="90"/>
    </location>
</feature>
<feature type="site" description="Key residue for binding with integrin">
    <location>
        <position position="133"/>
    </location>
</feature>
<feature type="disulfide bond" evidence="1 4">
    <location>
        <begin position="27"/>
        <end position="38"/>
    </location>
</feature>
<feature type="disulfide bond" evidence="1 4">
    <location>
        <begin position="55"/>
        <end position="152"/>
    </location>
</feature>
<feature type="disulfide bond" description="Interchain (with C-100 in subunit B)" evidence="1 4">
    <location>
        <position position="104"/>
    </location>
</feature>
<feature type="disulfide bond" evidence="1 4">
    <location>
        <begin position="127"/>
        <end position="144"/>
    </location>
</feature>
<feature type="strand" evidence="12">
    <location>
        <begin position="32"/>
        <end position="34"/>
    </location>
</feature>
<feature type="strand" evidence="12">
    <location>
        <begin position="37"/>
        <end position="46"/>
    </location>
</feature>
<feature type="helix" evidence="12">
    <location>
        <begin position="48"/>
        <end position="58"/>
    </location>
</feature>
<feature type="helix" evidence="12">
    <location>
        <begin position="70"/>
        <end position="79"/>
    </location>
</feature>
<feature type="helix" evidence="12">
    <location>
        <begin position="81"/>
        <end position="85"/>
    </location>
</feature>
<feature type="strand" evidence="12">
    <location>
        <begin position="90"/>
        <end position="97"/>
    </location>
</feature>
<feature type="strand" evidence="12">
    <location>
        <begin position="100"/>
        <end position="102"/>
    </location>
</feature>
<feature type="strand" evidence="12">
    <location>
        <begin position="127"/>
        <end position="131"/>
    </location>
</feature>
<feature type="helix" evidence="12">
    <location>
        <begin position="132"/>
        <end position="134"/>
    </location>
</feature>
<feature type="strand" evidence="12">
    <location>
        <begin position="138"/>
        <end position="142"/>
    </location>
</feature>
<feature type="strand" evidence="12">
    <location>
        <begin position="148"/>
        <end position="155"/>
    </location>
</feature>
<reference key="1">
    <citation type="journal article" date="2003" name="J. Biochem.">
        <title>Characterization and preliminary crystallographic studies of EMS16, an antagonist of collagen receptor (GPIa/IIa) from the venom of Echis multisquamatus.</title>
        <authorList>
            <person name="Okuda D."/>
            <person name="Horii K."/>
            <person name="Mizuno H."/>
            <person name="Morita T."/>
        </authorList>
    </citation>
    <scope>NUCLEOTIDE SEQUENCE [MRNA]</scope>
    <scope>PROTEIN SEQUENCE OF 24-44</scope>
    <scope>SUBCELLULAR LOCATION</scope>
    <source>
        <tissue>Venom</tissue>
        <tissue>Venom gland</tissue>
    </source>
</reference>
<reference key="2">
    <citation type="journal article" date="2000" name="Biochemistry">
        <title>Isolation and characterization of EMS16, a C-lectin type protein from Echis multisquamatus venom, a potent and selective inhibitor of the alpha2beta1 integrin.</title>
        <authorList>
            <person name="Marcinkiewicz C."/>
            <person name="Lobb R.R."/>
            <person name="Marcinkiewicz M.M."/>
            <person name="Daniel J.L."/>
            <person name="Smith J.B."/>
            <person name="Dangelmaier C."/>
            <person name="Weinreb P.H."/>
            <person name="Beacham D.A."/>
            <person name="Niewiarowski S."/>
        </authorList>
    </citation>
    <scope>PROTEIN SEQUENCE OF 24-82</scope>
    <scope>SUBCELLULAR LOCATION</scope>
    <scope>FUNCTION</scope>
    <source>
        <tissue>Venom</tissue>
    </source>
</reference>
<reference key="3">
    <citation type="journal article" date="2003" name="Biochemistry">
        <title>Structural characterization of EMS16, an antagonist of collagen receptor (GPIa/IIa) from the venom of Echis multisquamatus.</title>
        <authorList>
            <person name="Horii K."/>
            <person name="Okuda D."/>
            <person name="Morita T."/>
            <person name="Mizuno H."/>
        </authorList>
    </citation>
    <scope>X-RAY CRYSTALLOGRAPHY (1.9 ANGSTROMS) OF 24-157 IN COMPLEX WITH EMS16B</scope>
    <scope>DISULFIDE BONDS</scope>
</reference>
<reference key="4">
    <citation type="journal article" date="2004" name="J. Mol. Biol.">
        <title>Crystal structure of EMS16 in complex with the integrin alpha2-I domain.</title>
        <authorList>
            <person name="Horii K."/>
            <person name="Okuda D."/>
            <person name="Morita T."/>
            <person name="Mizuno H."/>
        </authorList>
    </citation>
    <scope>X-RAY CRYSTALLOGRAPHY (1.9 ANGSTROMS) OF 24-157 IN COMPLEX WITH EMS16B AND ITGA2</scope>
    <scope>SITES</scope>
</reference>
<evidence type="ECO:0000255" key="1">
    <source>
        <dbReference type="PROSITE-ProRule" id="PRU00040"/>
    </source>
</evidence>
<evidence type="ECO:0000269" key="2">
    <source>
    </source>
</evidence>
<evidence type="ECO:0000269" key="3">
    <source>
    </source>
</evidence>
<evidence type="ECO:0000269" key="4">
    <source>
    </source>
</evidence>
<evidence type="ECO:0000269" key="5">
    <source>
    </source>
</evidence>
<evidence type="ECO:0000303" key="6">
    <source>
    </source>
</evidence>
<evidence type="ECO:0000303" key="7">
    <source>
    </source>
</evidence>
<evidence type="ECO:0000303" key="8">
    <source>
    </source>
</evidence>
<evidence type="ECO:0000305" key="9"/>
<evidence type="ECO:0000305" key="10">
    <source>
    </source>
</evidence>
<evidence type="ECO:0000305" key="11">
    <source>
    </source>
</evidence>
<evidence type="ECO:0007829" key="12">
    <source>
        <dbReference type="PDB" id="1UKM"/>
    </source>
</evidence>
<keyword id="KW-0002">3D-structure</keyword>
<keyword id="KW-0903">Direct protein sequencing</keyword>
<keyword id="KW-1015">Disulfide bond</keyword>
<keyword id="KW-1199">Hemostasis impairing toxin</keyword>
<keyword id="KW-1201">Platelet aggregation inhibiting toxin</keyword>
<keyword id="KW-0964">Secreted</keyword>
<keyword id="KW-0732">Signal</keyword>
<keyword id="KW-0800">Toxin</keyword>
<comment type="function">
    <text evidence="2">EMS16 is a potent and selective inhibitor of alpha-2/beta-1 (ITGA2/ITGB1) integrin and acts as a potent antagonist of platelet aggregation and cell migration. Binds specifically to the I domain of the alpha-2 subunit, in a metal ion-independent fashion.</text>
</comment>
<comment type="subunit">
    <text evidence="4 5">Heterodimer of subunits A and B; disulfide-linked.</text>
</comment>
<comment type="subcellular location">
    <subcellularLocation>
        <location evidence="2 3">Secreted</location>
    </subcellularLocation>
</comment>
<comment type="tissue specificity">
    <text evidence="10 11">Expressed by the venom gland.</text>
</comment>
<comment type="similarity">
    <text evidence="9">Belongs to the snaclec family.</text>
</comment>
<proteinExistence type="evidence at protein level"/>
<dbReference type="EMBL" id="AB098253">
    <property type="protein sequence ID" value="BAC77706.1"/>
    <property type="molecule type" value="mRNA"/>
</dbReference>
<dbReference type="PDB" id="1UKM">
    <property type="method" value="X-ray"/>
    <property type="resolution" value="1.90 A"/>
    <property type="chains" value="A=24-157"/>
</dbReference>
<dbReference type="PDB" id="1V7P">
    <property type="method" value="X-ray"/>
    <property type="resolution" value="1.90 A"/>
    <property type="chains" value="A=24-157"/>
</dbReference>
<dbReference type="PDBsum" id="1UKM"/>
<dbReference type="PDBsum" id="1V7P"/>
<dbReference type="SMR" id="Q7T2Q1"/>
<dbReference type="IntAct" id="Q7T2Q1">
    <property type="interactions" value="1"/>
</dbReference>
<dbReference type="EvolutionaryTrace" id="Q7T2Q1"/>
<dbReference type="GO" id="GO:0005576">
    <property type="term" value="C:extracellular region"/>
    <property type="evidence" value="ECO:0007669"/>
    <property type="project" value="UniProtKB-SubCell"/>
</dbReference>
<dbReference type="GO" id="GO:0090729">
    <property type="term" value="F:toxin activity"/>
    <property type="evidence" value="ECO:0007669"/>
    <property type="project" value="UniProtKB-KW"/>
</dbReference>
<dbReference type="FunFam" id="3.10.100.10:FF:000087">
    <property type="entry name" value="Snaclec rhodocetin subunit delta"/>
    <property type="match status" value="1"/>
</dbReference>
<dbReference type="Gene3D" id="3.10.100.10">
    <property type="entry name" value="Mannose-Binding Protein A, subunit A"/>
    <property type="match status" value="1"/>
</dbReference>
<dbReference type="InterPro" id="IPR001304">
    <property type="entry name" value="C-type_lectin-like"/>
</dbReference>
<dbReference type="InterPro" id="IPR016186">
    <property type="entry name" value="C-type_lectin-like/link_sf"/>
</dbReference>
<dbReference type="InterPro" id="IPR050111">
    <property type="entry name" value="C-type_lectin/snaclec_domain"/>
</dbReference>
<dbReference type="InterPro" id="IPR016187">
    <property type="entry name" value="CTDL_fold"/>
</dbReference>
<dbReference type="PANTHER" id="PTHR22803">
    <property type="entry name" value="MANNOSE, PHOSPHOLIPASE, LECTIN RECEPTOR RELATED"/>
    <property type="match status" value="1"/>
</dbReference>
<dbReference type="Pfam" id="PF00059">
    <property type="entry name" value="Lectin_C"/>
    <property type="match status" value="1"/>
</dbReference>
<dbReference type="PRINTS" id="PR01504">
    <property type="entry name" value="PNCREATITSAP"/>
</dbReference>
<dbReference type="SMART" id="SM00034">
    <property type="entry name" value="CLECT"/>
    <property type="match status" value="1"/>
</dbReference>
<dbReference type="SUPFAM" id="SSF56436">
    <property type="entry name" value="C-type lectin-like"/>
    <property type="match status" value="1"/>
</dbReference>
<dbReference type="PROSITE" id="PS50041">
    <property type="entry name" value="C_TYPE_LECTIN_2"/>
    <property type="match status" value="1"/>
</dbReference>
<accession>Q7T2Q1</accession>
<organism>
    <name type="scientific">Echis multisquamatus</name>
    <name type="common">Central Asian sand viper</name>
    <dbReference type="NCBI Taxonomy" id="93050"/>
    <lineage>
        <taxon>Eukaryota</taxon>
        <taxon>Metazoa</taxon>
        <taxon>Chordata</taxon>
        <taxon>Craniata</taxon>
        <taxon>Vertebrata</taxon>
        <taxon>Euteleostomi</taxon>
        <taxon>Lepidosauria</taxon>
        <taxon>Squamata</taxon>
        <taxon>Bifurcata</taxon>
        <taxon>Unidentata</taxon>
        <taxon>Episquamata</taxon>
        <taxon>Toxicofera</taxon>
        <taxon>Serpentes</taxon>
        <taxon>Colubroidea</taxon>
        <taxon>Viperidae</taxon>
        <taxon>Viperinae</taxon>
        <taxon>Echis</taxon>
    </lineage>
</organism>